<protein>
    <recommendedName>
        <fullName evidence="1">Phenylalanine--tRNA ligase alpha subunit</fullName>
        <ecNumber evidence="1">6.1.1.20</ecNumber>
    </recommendedName>
    <alternativeName>
        <fullName evidence="1">Phenylalanyl-tRNA synthetase alpha subunit</fullName>
        <shortName evidence="1">PheRS</shortName>
    </alternativeName>
</protein>
<comment type="catalytic activity">
    <reaction evidence="1">
        <text>tRNA(Phe) + L-phenylalanine + ATP = L-phenylalanyl-tRNA(Phe) + AMP + diphosphate + H(+)</text>
        <dbReference type="Rhea" id="RHEA:19413"/>
        <dbReference type="Rhea" id="RHEA-COMP:9668"/>
        <dbReference type="Rhea" id="RHEA-COMP:9699"/>
        <dbReference type="ChEBI" id="CHEBI:15378"/>
        <dbReference type="ChEBI" id="CHEBI:30616"/>
        <dbReference type="ChEBI" id="CHEBI:33019"/>
        <dbReference type="ChEBI" id="CHEBI:58095"/>
        <dbReference type="ChEBI" id="CHEBI:78442"/>
        <dbReference type="ChEBI" id="CHEBI:78531"/>
        <dbReference type="ChEBI" id="CHEBI:456215"/>
        <dbReference type="EC" id="6.1.1.20"/>
    </reaction>
</comment>
<comment type="cofactor">
    <cofactor evidence="1">
        <name>Mg(2+)</name>
        <dbReference type="ChEBI" id="CHEBI:18420"/>
    </cofactor>
    <text evidence="1">Binds 2 magnesium ions per tetramer.</text>
</comment>
<comment type="subunit">
    <text evidence="1">Tetramer of two alpha and two beta subunits.</text>
</comment>
<comment type="subcellular location">
    <subcellularLocation>
        <location evidence="1">Cytoplasm</location>
    </subcellularLocation>
</comment>
<comment type="similarity">
    <text evidence="1">Belongs to the class-II aminoacyl-tRNA synthetase family. Phe-tRNA synthetase alpha subunit type 1 subfamily.</text>
</comment>
<accession>B2A5N5</accession>
<name>SYFA_NATTJ</name>
<dbReference type="EC" id="6.1.1.20" evidence="1"/>
<dbReference type="EMBL" id="CP001034">
    <property type="protein sequence ID" value="ACB85389.1"/>
    <property type="molecule type" value="Genomic_DNA"/>
</dbReference>
<dbReference type="RefSeq" id="WP_012448256.1">
    <property type="nucleotide sequence ID" value="NC_010718.1"/>
</dbReference>
<dbReference type="SMR" id="B2A5N5"/>
<dbReference type="FunCoup" id="B2A5N5">
    <property type="interactions" value="424"/>
</dbReference>
<dbReference type="STRING" id="457570.Nther_1817"/>
<dbReference type="KEGG" id="nth:Nther_1817"/>
<dbReference type="eggNOG" id="COG0016">
    <property type="taxonomic scope" value="Bacteria"/>
</dbReference>
<dbReference type="HOGENOM" id="CLU_025086_0_1_9"/>
<dbReference type="InParanoid" id="B2A5N5"/>
<dbReference type="OrthoDB" id="9800719at2"/>
<dbReference type="Proteomes" id="UP000001683">
    <property type="component" value="Chromosome"/>
</dbReference>
<dbReference type="GO" id="GO:0005737">
    <property type="term" value="C:cytoplasm"/>
    <property type="evidence" value="ECO:0007669"/>
    <property type="project" value="UniProtKB-SubCell"/>
</dbReference>
<dbReference type="GO" id="GO:0005524">
    <property type="term" value="F:ATP binding"/>
    <property type="evidence" value="ECO:0007669"/>
    <property type="project" value="UniProtKB-UniRule"/>
</dbReference>
<dbReference type="GO" id="GO:0140096">
    <property type="term" value="F:catalytic activity, acting on a protein"/>
    <property type="evidence" value="ECO:0007669"/>
    <property type="project" value="UniProtKB-ARBA"/>
</dbReference>
<dbReference type="GO" id="GO:0000287">
    <property type="term" value="F:magnesium ion binding"/>
    <property type="evidence" value="ECO:0007669"/>
    <property type="project" value="UniProtKB-UniRule"/>
</dbReference>
<dbReference type="GO" id="GO:0004826">
    <property type="term" value="F:phenylalanine-tRNA ligase activity"/>
    <property type="evidence" value="ECO:0007669"/>
    <property type="project" value="UniProtKB-UniRule"/>
</dbReference>
<dbReference type="GO" id="GO:0016740">
    <property type="term" value="F:transferase activity"/>
    <property type="evidence" value="ECO:0007669"/>
    <property type="project" value="UniProtKB-ARBA"/>
</dbReference>
<dbReference type="GO" id="GO:0000049">
    <property type="term" value="F:tRNA binding"/>
    <property type="evidence" value="ECO:0007669"/>
    <property type="project" value="InterPro"/>
</dbReference>
<dbReference type="GO" id="GO:0006432">
    <property type="term" value="P:phenylalanyl-tRNA aminoacylation"/>
    <property type="evidence" value="ECO:0007669"/>
    <property type="project" value="UniProtKB-UniRule"/>
</dbReference>
<dbReference type="CDD" id="cd00496">
    <property type="entry name" value="PheRS_alpha_core"/>
    <property type="match status" value="1"/>
</dbReference>
<dbReference type="FunFam" id="3.30.930.10:FF:000003">
    <property type="entry name" value="Phenylalanine--tRNA ligase alpha subunit"/>
    <property type="match status" value="1"/>
</dbReference>
<dbReference type="Gene3D" id="3.30.930.10">
    <property type="entry name" value="Bira Bifunctional Protein, Domain 2"/>
    <property type="match status" value="1"/>
</dbReference>
<dbReference type="HAMAP" id="MF_00281">
    <property type="entry name" value="Phe_tRNA_synth_alpha1"/>
    <property type="match status" value="1"/>
</dbReference>
<dbReference type="InterPro" id="IPR006195">
    <property type="entry name" value="aa-tRNA-synth_II"/>
</dbReference>
<dbReference type="InterPro" id="IPR045864">
    <property type="entry name" value="aa-tRNA-synth_II/BPL/LPL"/>
</dbReference>
<dbReference type="InterPro" id="IPR004529">
    <property type="entry name" value="Phe-tRNA-synth_IIc_asu"/>
</dbReference>
<dbReference type="InterPro" id="IPR004188">
    <property type="entry name" value="Phe-tRNA_ligase_II_N"/>
</dbReference>
<dbReference type="InterPro" id="IPR022911">
    <property type="entry name" value="Phe_tRNA_ligase_alpha1_bac"/>
</dbReference>
<dbReference type="InterPro" id="IPR002319">
    <property type="entry name" value="Phenylalanyl-tRNA_Synthase"/>
</dbReference>
<dbReference type="InterPro" id="IPR010978">
    <property type="entry name" value="tRNA-bd_arm"/>
</dbReference>
<dbReference type="NCBIfam" id="TIGR00468">
    <property type="entry name" value="pheS"/>
    <property type="match status" value="1"/>
</dbReference>
<dbReference type="PANTHER" id="PTHR11538:SF41">
    <property type="entry name" value="PHENYLALANINE--TRNA LIGASE, MITOCHONDRIAL"/>
    <property type="match status" value="1"/>
</dbReference>
<dbReference type="PANTHER" id="PTHR11538">
    <property type="entry name" value="PHENYLALANYL-TRNA SYNTHETASE"/>
    <property type="match status" value="1"/>
</dbReference>
<dbReference type="Pfam" id="PF02912">
    <property type="entry name" value="Phe_tRNA-synt_N"/>
    <property type="match status" value="1"/>
</dbReference>
<dbReference type="Pfam" id="PF01409">
    <property type="entry name" value="tRNA-synt_2d"/>
    <property type="match status" value="1"/>
</dbReference>
<dbReference type="SUPFAM" id="SSF55681">
    <property type="entry name" value="Class II aaRS and biotin synthetases"/>
    <property type="match status" value="1"/>
</dbReference>
<dbReference type="SUPFAM" id="SSF46589">
    <property type="entry name" value="tRNA-binding arm"/>
    <property type="match status" value="1"/>
</dbReference>
<dbReference type="PROSITE" id="PS50862">
    <property type="entry name" value="AA_TRNA_LIGASE_II"/>
    <property type="match status" value="1"/>
</dbReference>
<keyword id="KW-0030">Aminoacyl-tRNA synthetase</keyword>
<keyword id="KW-0067">ATP-binding</keyword>
<keyword id="KW-0963">Cytoplasm</keyword>
<keyword id="KW-0436">Ligase</keyword>
<keyword id="KW-0460">Magnesium</keyword>
<keyword id="KW-0479">Metal-binding</keyword>
<keyword id="KW-0547">Nucleotide-binding</keyword>
<keyword id="KW-0648">Protein biosynthesis</keyword>
<keyword id="KW-1185">Reference proteome</keyword>
<evidence type="ECO:0000255" key="1">
    <source>
        <dbReference type="HAMAP-Rule" id="MF_00281"/>
    </source>
</evidence>
<feature type="chain" id="PRO_1000114893" description="Phenylalanine--tRNA ligase alpha subunit">
    <location>
        <begin position="1"/>
        <end position="341"/>
    </location>
</feature>
<feature type="binding site" evidence="1">
    <location>
        <position position="255"/>
    </location>
    <ligand>
        <name>Mg(2+)</name>
        <dbReference type="ChEBI" id="CHEBI:18420"/>
        <note>shared with beta subunit</note>
    </ligand>
</feature>
<sequence>MQEELKELKEKALVDISEASSLDKLKDVQVKYLGKKGELTKILRGMGNLSPEERPVVGKLANEIRDDLEQAFEERENNLKEAEMQKRWEEEKIDVTLPGRVISRGAKHPLKKVLDEVHDIFLGMGYNIEEGPEIETDYYNFEALNIPKGHPAREMQDSLYITEEILLRTHTSPVQIRTMEQVAPEIPVRIICTGKVYRKDDDATHSPMFHQIEGLVVGERITLGDLKGTLLNFAKQMFGPEVDIRLRPSYFPFTEPSAEVDISCVICEGSGCRVCKGTGWLEILGSGMVHPKVFEMSGYDPDKVTGFAFGMGVERIAMLKYGIQDLRIFFENDKRMVNQFK</sequence>
<reference key="1">
    <citation type="submission" date="2008-04" db="EMBL/GenBank/DDBJ databases">
        <title>Complete sequence of chromosome of Natranaerobius thermophilus JW/NM-WN-LF.</title>
        <authorList>
            <consortium name="US DOE Joint Genome Institute"/>
            <person name="Copeland A."/>
            <person name="Lucas S."/>
            <person name="Lapidus A."/>
            <person name="Glavina del Rio T."/>
            <person name="Dalin E."/>
            <person name="Tice H."/>
            <person name="Bruce D."/>
            <person name="Goodwin L."/>
            <person name="Pitluck S."/>
            <person name="Chertkov O."/>
            <person name="Brettin T."/>
            <person name="Detter J.C."/>
            <person name="Han C."/>
            <person name="Kuske C.R."/>
            <person name="Schmutz J."/>
            <person name="Larimer F."/>
            <person name="Land M."/>
            <person name="Hauser L."/>
            <person name="Kyrpides N."/>
            <person name="Lykidis A."/>
            <person name="Mesbah N.M."/>
            <person name="Wiegel J."/>
        </authorList>
    </citation>
    <scope>NUCLEOTIDE SEQUENCE [LARGE SCALE GENOMIC DNA]</scope>
    <source>
        <strain>ATCC BAA-1301 / DSM 18059 / JW/NM-WN-LF</strain>
    </source>
</reference>
<organism>
    <name type="scientific">Natranaerobius thermophilus (strain ATCC BAA-1301 / DSM 18059 / JW/NM-WN-LF)</name>
    <dbReference type="NCBI Taxonomy" id="457570"/>
    <lineage>
        <taxon>Bacteria</taxon>
        <taxon>Bacillati</taxon>
        <taxon>Bacillota</taxon>
        <taxon>Clostridia</taxon>
        <taxon>Natranaerobiales</taxon>
        <taxon>Natranaerobiaceae</taxon>
        <taxon>Natranaerobius</taxon>
    </lineage>
</organism>
<proteinExistence type="inferred from homology"/>
<gene>
    <name evidence="1" type="primary">pheS</name>
    <name type="ordered locus">Nther_1817</name>
</gene>